<name>PSA_STRCO</name>
<keyword id="KW-0963">Cytoplasm</keyword>
<keyword id="KW-0647">Proteasome</keyword>
<keyword id="KW-1185">Reference proteome</keyword>
<accession>Q7AKQ6</accession>
<accession>O87599</accession>
<evidence type="ECO:0000255" key="1">
    <source>
        <dbReference type="HAMAP-Rule" id="MF_00289"/>
    </source>
</evidence>
<evidence type="ECO:0000256" key="2">
    <source>
        <dbReference type="SAM" id="MobiDB-lite"/>
    </source>
</evidence>
<evidence type="ECO:0000269" key="3">
    <source>
    </source>
</evidence>
<reference key="1">
    <citation type="journal article" date="1998" name="J. Bacteriol.">
        <title>The 20S proteasome of Streptomyces coelicolor.</title>
        <authorList>
            <person name="Nagy I."/>
            <person name="Tamura T."/>
            <person name="Vanderleyden J."/>
            <person name="Baumeister W."/>
            <person name="De Mot R."/>
        </authorList>
    </citation>
    <scope>NUCLEOTIDE SEQUENCE [GENOMIC DNA]</scope>
    <scope>FUNCTION</scope>
    <scope>CATALYTIC ACTIVITY</scope>
    <scope>SUBSTRATE SPECIFICITY</scope>
    <scope>SUBUNIT</scope>
    <scope>ACTIVITY REGULATION</scope>
    <scope>TEMPERATURE DEPENDENCE</scope>
    <scope>BLOCKAGE OF N-TERMINUS</scope>
    <source>
        <strain>ATCC BAA-471 / A3(2) / M145</strain>
    </source>
</reference>
<reference key="2">
    <citation type="journal article" date="2002" name="Nature">
        <title>Complete genome sequence of the model actinomycete Streptomyces coelicolor A3(2).</title>
        <authorList>
            <person name="Bentley S.D."/>
            <person name="Chater K.F."/>
            <person name="Cerdeno-Tarraga A.-M."/>
            <person name="Challis G.L."/>
            <person name="Thomson N.R."/>
            <person name="James K.D."/>
            <person name="Harris D.E."/>
            <person name="Quail M.A."/>
            <person name="Kieser H."/>
            <person name="Harper D."/>
            <person name="Bateman A."/>
            <person name="Brown S."/>
            <person name="Chandra G."/>
            <person name="Chen C.W."/>
            <person name="Collins M."/>
            <person name="Cronin A."/>
            <person name="Fraser A."/>
            <person name="Goble A."/>
            <person name="Hidalgo J."/>
            <person name="Hornsby T."/>
            <person name="Howarth S."/>
            <person name="Huang C.-H."/>
            <person name="Kieser T."/>
            <person name="Larke L."/>
            <person name="Murphy L.D."/>
            <person name="Oliver K."/>
            <person name="O'Neil S."/>
            <person name="Rabbinowitsch E."/>
            <person name="Rajandream M.A."/>
            <person name="Rutherford K.M."/>
            <person name="Rutter S."/>
            <person name="Seeger K."/>
            <person name="Saunders D."/>
            <person name="Sharp S."/>
            <person name="Squares R."/>
            <person name="Squares S."/>
            <person name="Taylor K."/>
            <person name="Warren T."/>
            <person name="Wietzorrek A."/>
            <person name="Woodward J.R."/>
            <person name="Barrell B.G."/>
            <person name="Parkhill J."/>
            <person name="Hopwood D.A."/>
        </authorList>
    </citation>
    <scope>NUCLEOTIDE SEQUENCE [LARGE SCALE GENOMIC DNA]</scope>
    <source>
        <strain>ATCC BAA-471 / A3(2) / M145</strain>
    </source>
</reference>
<sequence>MSTPFYVSPQQAMADRAEYARKGIARGRSLVVLQYADGIVFVGENPSRALHKFSEIYDRIGFAAAGKYNEYENLRIGGVRYADLRGYTYDRDDVTARGLANVYAQTLGTIFSSQAEKPYEVELVVAEVGDSPENDQIYRLPHDGSIVDEHGSVAVGGNAEQISGYLDQRHRDGMTLAEALKLAVQALSRDTNGTEREIPAERLEVAVLDRTRPQQRKFKRIVGGQLSRLLESGAASADGEAETEAETDSGSDEE</sequence>
<feature type="chain" id="PRO_0000383484" description="Proteasome subunit alpha">
    <location>
        <begin position="1"/>
        <end position="254"/>
    </location>
</feature>
<feature type="region of interest" description="Disordered" evidence="2">
    <location>
        <begin position="231"/>
        <end position="254"/>
    </location>
</feature>
<feature type="compositionally biased region" description="Acidic residues" evidence="2">
    <location>
        <begin position="239"/>
        <end position="254"/>
    </location>
</feature>
<protein>
    <recommendedName>
        <fullName evidence="1">Proteasome subunit alpha</fullName>
    </recommendedName>
    <alternativeName>
        <fullName evidence="1">20S proteasome alpha subunit</fullName>
    </alternativeName>
    <alternativeName>
        <fullName evidence="1">Proteasome core protein PrcA</fullName>
    </alternativeName>
</protein>
<dbReference type="EMBL" id="AF086832">
    <property type="protein sequence ID" value="AAC64278.1"/>
    <property type="molecule type" value="Genomic_DNA"/>
</dbReference>
<dbReference type="EMBL" id="AL939109">
    <property type="protein sequence ID" value="CAB59496.1"/>
    <property type="molecule type" value="Genomic_DNA"/>
</dbReference>
<dbReference type="RefSeq" id="NP_625918.1">
    <property type="nucleotide sequence ID" value="NC_003888.3"/>
</dbReference>
<dbReference type="RefSeq" id="WP_011027897.1">
    <property type="nucleotide sequence ID" value="NZ_VNID01000018.1"/>
</dbReference>
<dbReference type="SMR" id="Q7AKQ6"/>
<dbReference type="FunCoup" id="Q7AKQ6">
    <property type="interactions" value="1"/>
</dbReference>
<dbReference type="STRING" id="100226.gene:17759236"/>
<dbReference type="MEROPS" id="T01.011"/>
<dbReference type="PaxDb" id="100226-SCO1643"/>
<dbReference type="KEGG" id="sco:SCO1643"/>
<dbReference type="PATRIC" id="fig|100226.15.peg.1658"/>
<dbReference type="eggNOG" id="COG0638">
    <property type="taxonomic scope" value="Bacteria"/>
</dbReference>
<dbReference type="HOGENOM" id="CLU_071031_0_0_11"/>
<dbReference type="InParanoid" id="Q7AKQ6"/>
<dbReference type="OrthoDB" id="9775643at2"/>
<dbReference type="PhylomeDB" id="Q7AKQ6"/>
<dbReference type="UniPathway" id="UPA00997"/>
<dbReference type="Proteomes" id="UP000001973">
    <property type="component" value="Chromosome"/>
</dbReference>
<dbReference type="GO" id="GO:0005737">
    <property type="term" value="C:cytoplasm"/>
    <property type="evidence" value="ECO:0007669"/>
    <property type="project" value="UniProtKB-SubCell"/>
</dbReference>
<dbReference type="GO" id="GO:0019773">
    <property type="term" value="C:proteasome core complex, alpha-subunit complex"/>
    <property type="evidence" value="ECO:0000250"/>
    <property type="project" value="UniProtKB"/>
</dbReference>
<dbReference type="GO" id="GO:0004298">
    <property type="term" value="F:threonine-type endopeptidase activity"/>
    <property type="evidence" value="ECO:0007669"/>
    <property type="project" value="InterPro"/>
</dbReference>
<dbReference type="GO" id="GO:0043161">
    <property type="term" value="P:proteasome-mediated ubiquitin-dependent protein catabolic process"/>
    <property type="evidence" value="ECO:0000318"/>
    <property type="project" value="GO_Central"/>
</dbReference>
<dbReference type="CDD" id="cd01906">
    <property type="entry name" value="proteasome_protease_HslV"/>
    <property type="match status" value="1"/>
</dbReference>
<dbReference type="FunFam" id="3.60.20.10:FF:000023">
    <property type="entry name" value="Proteasome subunit alpha"/>
    <property type="match status" value="1"/>
</dbReference>
<dbReference type="Gene3D" id="3.60.20.10">
    <property type="entry name" value="Glutamine Phosphoribosylpyrophosphate, subunit 1, domain 1"/>
    <property type="match status" value="1"/>
</dbReference>
<dbReference type="HAMAP" id="MF_00289_B">
    <property type="entry name" value="Proteasome_A_B"/>
    <property type="match status" value="1"/>
</dbReference>
<dbReference type="InterPro" id="IPR029055">
    <property type="entry name" value="Ntn_hydrolases_N"/>
</dbReference>
<dbReference type="InterPro" id="IPR050115">
    <property type="entry name" value="Proteasome_alpha"/>
</dbReference>
<dbReference type="InterPro" id="IPR023332">
    <property type="entry name" value="Proteasome_alpha-type"/>
</dbReference>
<dbReference type="InterPro" id="IPR022296">
    <property type="entry name" value="Proteasome_asu_bac"/>
</dbReference>
<dbReference type="InterPro" id="IPR001353">
    <property type="entry name" value="Proteasome_sua/b"/>
</dbReference>
<dbReference type="NCBIfam" id="TIGR03691">
    <property type="entry name" value="20S_bact_alpha"/>
    <property type="match status" value="1"/>
</dbReference>
<dbReference type="PANTHER" id="PTHR11599">
    <property type="entry name" value="PROTEASOME SUBUNIT ALPHA/BETA"/>
    <property type="match status" value="1"/>
</dbReference>
<dbReference type="Pfam" id="PF00227">
    <property type="entry name" value="Proteasome"/>
    <property type="match status" value="1"/>
</dbReference>
<dbReference type="SUPFAM" id="SSF56235">
    <property type="entry name" value="N-terminal nucleophile aminohydrolases (Ntn hydrolases)"/>
    <property type="match status" value="1"/>
</dbReference>
<dbReference type="PROSITE" id="PS51475">
    <property type="entry name" value="PROTEASOME_ALPHA_2"/>
    <property type="match status" value="1"/>
</dbReference>
<comment type="function">
    <text evidence="1 3">Component of the proteasome core, a large protease complex with broad specificity involved in protein degradation. The S.coelicolor proteasome is able to cleave oligopeptides after hydrophobic residues, but not after basic or acidic residues, thus displaying chymotrypsin-like activity but not trypsin-like activity.</text>
</comment>
<comment type="activity regulation">
    <text evidence="1 3">The formation of the proteasomal ATPase ARC-20S proteasome complex, likely via the docking of the C-termini of ARC into the intersubunit pockets in the alpha-rings, may trigger opening of the gate for substrate entry. Interconversion between the open-gate and close-gate conformations leads to a dynamic regulation of the 20S proteasome proteolysis activity (By similarity). Peptidolytic activity is completely inhibited by lactacystin, and to a lesser extent, by N-acetyl-Leu-Leu-norleucinal (Ac-LLnL) and benzoyloxycarbonyl-Leu-Leu-Leu-vinylsulfone (Z-LLL-VS) in vitro.</text>
</comment>
<comment type="biophysicochemical properties">
    <temperatureDependence>
        <text evidence="3">Optimum temperature is 55 degrees Celsius.</text>
    </temperatureDependence>
</comment>
<comment type="pathway">
    <text evidence="1">Protein degradation; proteasomal Pup-dependent pathway.</text>
</comment>
<comment type="subunit">
    <text evidence="3">The 20S proteasome core is composed of 14 alpha and 14 beta subunits that assemble into four stacked heptameric rings, resulting in a barrel-shaped structure. The two inner rings, each composed of seven catalytic beta subunits, are sandwiched by two outer rings, each composed of seven alpha subunits. The catalytic chamber with the active sites is on the inside of the barrel. Has probably a gated structure, the ends of the cylinder being occluded by the N-termini of the alpha-subunits. Is likely capped by the proteasome-associated ATPase, ARC.</text>
</comment>
<comment type="subcellular location">
    <subcellularLocation>
        <location evidence="1">Cytoplasm</location>
    </subcellularLocation>
</comment>
<comment type="PTM">
    <text>The N-terminus is blocked.</text>
</comment>
<comment type="similarity">
    <text evidence="1">Belongs to the peptidase T1A family.</text>
</comment>
<organism>
    <name type="scientific">Streptomyces coelicolor (strain ATCC BAA-471 / A3(2) / M145)</name>
    <dbReference type="NCBI Taxonomy" id="100226"/>
    <lineage>
        <taxon>Bacteria</taxon>
        <taxon>Bacillati</taxon>
        <taxon>Actinomycetota</taxon>
        <taxon>Actinomycetes</taxon>
        <taxon>Kitasatosporales</taxon>
        <taxon>Streptomycetaceae</taxon>
        <taxon>Streptomyces</taxon>
        <taxon>Streptomyces albidoflavus group</taxon>
    </lineage>
</organism>
<gene>
    <name evidence="1" type="primary">prcA</name>
    <name type="ordered locus">SCO1643</name>
    <name type="ORF">SCI41.26</name>
</gene>
<proteinExistence type="evidence at protein level"/>